<dbReference type="EC" id="4.3.1.19"/>
<dbReference type="EMBL" id="BA000017">
    <property type="protein sequence ID" value="BAB57600.1"/>
    <property type="molecule type" value="Genomic_DNA"/>
</dbReference>
<dbReference type="RefSeq" id="WP_000210817.1">
    <property type="nucleotide sequence ID" value="NC_002758.2"/>
</dbReference>
<dbReference type="SMR" id="Q99U50"/>
<dbReference type="KEGG" id="sav:SAV1438"/>
<dbReference type="HOGENOM" id="CLU_021152_4_2_9"/>
<dbReference type="PhylomeDB" id="Q99U50"/>
<dbReference type="UniPathway" id="UPA00052">
    <property type="reaction ID" value="UER00507"/>
</dbReference>
<dbReference type="Proteomes" id="UP000002481">
    <property type="component" value="Chromosome"/>
</dbReference>
<dbReference type="GO" id="GO:0003941">
    <property type="term" value="F:L-serine ammonia-lyase activity"/>
    <property type="evidence" value="ECO:0007669"/>
    <property type="project" value="TreeGrafter"/>
</dbReference>
<dbReference type="GO" id="GO:0000166">
    <property type="term" value="F:nucleotide binding"/>
    <property type="evidence" value="ECO:0007669"/>
    <property type="project" value="UniProtKB-KW"/>
</dbReference>
<dbReference type="GO" id="GO:0030170">
    <property type="term" value="F:pyridoxal phosphate binding"/>
    <property type="evidence" value="ECO:0007669"/>
    <property type="project" value="InterPro"/>
</dbReference>
<dbReference type="GO" id="GO:0004794">
    <property type="term" value="F:threonine deaminase activity"/>
    <property type="evidence" value="ECO:0007669"/>
    <property type="project" value="UniProtKB-EC"/>
</dbReference>
<dbReference type="GO" id="GO:0009097">
    <property type="term" value="P:isoleucine biosynthetic process"/>
    <property type="evidence" value="ECO:0007669"/>
    <property type="project" value="TreeGrafter"/>
</dbReference>
<dbReference type="GO" id="GO:0006565">
    <property type="term" value="P:L-serine catabolic process"/>
    <property type="evidence" value="ECO:0007669"/>
    <property type="project" value="TreeGrafter"/>
</dbReference>
<dbReference type="GO" id="GO:0070689">
    <property type="term" value="P:L-threonine catabolic process to propionate"/>
    <property type="evidence" value="ECO:0007669"/>
    <property type="project" value="UniProtKB-UniPathway"/>
</dbReference>
<dbReference type="CDD" id="cd01562">
    <property type="entry name" value="Thr-dehyd"/>
    <property type="match status" value="1"/>
</dbReference>
<dbReference type="FunFam" id="3.40.50.1100:FF:000007">
    <property type="entry name" value="L-threonine dehydratase catabolic TdcB"/>
    <property type="match status" value="1"/>
</dbReference>
<dbReference type="FunFam" id="3.40.50.1100:FF:000005">
    <property type="entry name" value="Threonine dehydratase catabolic"/>
    <property type="match status" value="1"/>
</dbReference>
<dbReference type="Gene3D" id="3.40.50.1100">
    <property type="match status" value="2"/>
</dbReference>
<dbReference type="InterPro" id="IPR050147">
    <property type="entry name" value="Ser/Thr_Dehydratase"/>
</dbReference>
<dbReference type="InterPro" id="IPR000634">
    <property type="entry name" value="Ser/Thr_deHydtase_PyrdxlP-BS"/>
</dbReference>
<dbReference type="InterPro" id="IPR005789">
    <property type="entry name" value="Thr_deHydtase_catblc"/>
</dbReference>
<dbReference type="InterPro" id="IPR001926">
    <property type="entry name" value="TrpB-like_PALP"/>
</dbReference>
<dbReference type="InterPro" id="IPR036052">
    <property type="entry name" value="TrpB-like_PALP_sf"/>
</dbReference>
<dbReference type="NCBIfam" id="TIGR01127">
    <property type="entry name" value="ilvA_1Cterm"/>
    <property type="match status" value="1"/>
</dbReference>
<dbReference type="NCBIfam" id="NF006389">
    <property type="entry name" value="PRK08638.1"/>
    <property type="match status" value="1"/>
</dbReference>
<dbReference type="PANTHER" id="PTHR48078:SF6">
    <property type="entry name" value="L-THREONINE DEHYDRATASE CATABOLIC TDCB"/>
    <property type="match status" value="1"/>
</dbReference>
<dbReference type="PANTHER" id="PTHR48078">
    <property type="entry name" value="THREONINE DEHYDRATASE, MITOCHONDRIAL-RELATED"/>
    <property type="match status" value="1"/>
</dbReference>
<dbReference type="Pfam" id="PF00291">
    <property type="entry name" value="PALP"/>
    <property type="match status" value="1"/>
</dbReference>
<dbReference type="SUPFAM" id="SSF53686">
    <property type="entry name" value="Tryptophan synthase beta subunit-like PLP-dependent enzymes"/>
    <property type="match status" value="1"/>
</dbReference>
<dbReference type="PROSITE" id="PS00165">
    <property type="entry name" value="DEHYDRATASE_SER_THR"/>
    <property type="match status" value="1"/>
</dbReference>
<reference key="1">
    <citation type="journal article" date="2001" name="Lancet">
        <title>Whole genome sequencing of meticillin-resistant Staphylococcus aureus.</title>
        <authorList>
            <person name="Kuroda M."/>
            <person name="Ohta T."/>
            <person name="Uchiyama I."/>
            <person name="Baba T."/>
            <person name="Yuzawa H."/>
            <person name="Kobayashi I."/>
            <person name="Cui L."/>
            <person name="Oguchi A."/>
            <person name="Aoki K."/>
            <person name="Nagai Y."/>
            <person name="Lian J.-Q."/>
            <person name="Ito T."/>
            <person name="Kanamori M."/>
            <person name="Matsumaru H."/>
            <person name="Maruyama A."/>
            <person name="Murakami H."/>
            <person name="Hosoyama A."/>
            <person name="Mizutani-Ui Y."/>
            <person name="Takahashi N.K."/>
            <person name="Sawano T."/>
            <person name="Inoue R."/>
            <person name="Kaito C."/>
            <person name="Sekimizu K."/>
            <person name="Hirakawa H."/>
            <person name="Kuhara S."/>
            <person name="Goto S."/>
            <person name="Yabuzaki J."/>
            <person name="Kanehisa M."/>
            <person name="Yamashita A."/>
            <person name="Oshima K."/>
            <person name="Furuya K."/>
            <person name="Yoshino C."/>
            <person name="Shiba T."/>
            <person name="Hattori M."/>
            <person name="Ogasawara N."/>
            <person name="Hayashi H."/>
            <person name="Hiramatsu K."/>
        </authorList>
    </citation>
    <scope>NUCLEOTIDE SEQUENCE [LARGE SCALE GENOMIC DNA]</scope>
    <source>
        <strain>Mu50 / ATCC 700699</strain>
    </source>
</reference>
<evidence type="ECO:0000250" key="1"/>
<evidence type="ECO:0000305" key="2"/>
<comment type="function">
    <text evidence="1">Catalyzes the anaerobic formation of alpha-ketobutyrate and ammonia from threonine in a two-step reaction. The first step involved a dehydration of threonine and a production of enamine intermediates (aminocrotonate), which tautomerizes to its imine form (iminobutyrate). Both intermediates are unstable and short-lived. The second step is the nonenzymatic hydrolysis of the enamine/imine intermediates to form 2-ketobutyrate and free ammonia. In the low water environment of the cell, the second step is accelerated by RidA (By similarity).</text>
</comment>
<comment type="catalytic activity">
    <reaction>
        <text>L-threonine = 2-oxobutanoate + NH4(+)</text>
        <dbReference type="Rhea" id="RHEA:22108"/>
        <dbReference type="ChEBI" id="CHEBI:16763"/>
        <dbReference type="ChEBI" id="CHEBI:28938"/>
        <dbReference type="ChEBI" id="CHEBI:57926"/>
        <dbReference type="EC" id="4.3.1.19"/>
    </reaction>
</comment>
<comment type="cofactor">
    <cofactor evidence="1">
        <name>pyridoxal 5'-phosphate</name>
        <dbReference type="ChEBI" id="CHEBI:597326"/>
    </cofactor>
</comment>
<comment type="activity regulation">
    <text evidence="1">Each protein molecule can bind up to four molecules of AMP, which act as an allosteric activator to the enzyme.</text>
</comment>
<comment type="pathway">
    <text>Amino-acid degradation; L-threonine degradation via propanoate pathway; propanoate from L-threonine: step 1/4.</text>
</comment>
<comment type="subunit">
    <text evidence="1">In the native structure, TdcB is in a dimeric form, whereas in the TdcB-AMP complex, it exists in a tetrameric form (dimer of dimers).</text>
</comment>
<comment type="similarity">
    <text evidence="2">Belongs to the serine/threonine dehydratase family.</text>
</comment>
<sequence>MTTNTVTLQTAHIVSLGDIEEAKASIKPFIRRTPLIKSMYLSQNITKGNVYLKLENMQFTGSFKFRGASNKINHLSDEQKAKGIIGASAGNHAQGVALTAKLLGIDATIVMPETAPIAKQNATKGYGAKVILKGKNFNETRLYMEELAKENGMTIVHPYDDKFVMAGQGTIGLEILDDIWNVNTVIVPVGGGGLIAGIATALKSFNPSIHIIGVQAENVHGMAESFYKRALTEHREDSTIADGCDVKVPGEKTYEVVKHLVDEFILVSEEEIEHAMQDLMQRAKIITEGAGALPTAAILSGKIDKKWLEGKNVVALVSGGNVDLTRVSGVIEHGLNIADTSKGVVG</sequence>
<proteinExistence type="inferred from homology"/>
<keyword id="KW-0021">Allosteric enzyme</keyword>
<keyword id="KW-0456">Lyase</keyword>
<keyword id="KW-0547">Nucleotide-binding</keyword>
<keyword id="KW-0663">Pyridoxal phosphate</keyword>
<protein>
    <recommendedName>
        <fullName>L-threonine dehydratase catabolic TdcB</fullName>
        <ecNumber>4.3.1.19</ecNumber>
    </recommendedName>
    <alternativeName>
        <fullName>Threonine deaminase</fullName>
    </alternativeName>
</protein>
<organism>
    <name type="scientific">Staphylococcus aureus (strain Mu50 / ATCC 700699)</name>
    <dbReference type="NCBI Taxonomy" id="158878"/>
    <lineage>
        <taxon>Bacteria</taxon>
        <taxon>Bacillati</taxon>
        <taxon>Bacillota</taxon>
        <taxon>Bacilli</taxon>
        <taxon>Bacillales</taxon>
        <taxon>Staphylococcaceae</taxon>
        <taxon>Staphylococcus</taxon>
    </lineage>
</organism>
<name>TDCB_STAAM</name>
<gene>
    <name type="primary">tdcB</name>
    <name type="ordered locus">SAV1438</name>
</gene>
<accession>Q99U50</accession>
<feature type="chain" id="PRO_0000287330" description="L-threonine dehydratase catabolic TdcB">
    <location>
        <begin position="1"/>
        <end position="346"/>
    </location>
</feature>
<feature type="binding site" evidence="1">
    <location>
        <begin position="59"/>
        <end position="60"/>
    </location>
    <ligand>
        <name>AMP</name>
        <dbReference type="ChEBI" id="CHEBI:456215"/>
    </ligand>
</feature>
<feature type="binding site" evidence="1">
    <location>
        <position position="94"/>
    </location>
    <ligand>
        <name>AMP</name>
        <dbReference type="ChEBI" id="CHEBI:456215"/>
    </ligand>
</feature>
<feature type="binding site" evidence="1">
    <location>
        <begin position="125"/>
        <end position="126"/>
    </location>
    <ligand>
        <name>AMP</name>
        <dbReference type="ChEBI" id="CHEBI:456215"/>
    </ligand>
</feature>
<feature type="binding site" evidence="1">
    <location>
        <position position="321"/>
    </location>
    <ligand>
        <name>AMP</name>
        <dbReference type="ChEBI" id="CHEBI:456215"/>
    </ligand>
</feature>
<feature type="modified residue" description="N6-(pyridoxal phosphate)lysine" evidence="1">
    <location>
        <position position="64"/>
    </location>
</feature>